<feature type="chain" id="PRO_0000164666" description="Lens fiber membrane intrinsic protein">
    <location>
        <begin position="1"/>
        <end position="173"/>
    </location>
</feature>
<feature type="topological domain" description="Cytoplasmic" evidence="2">
    <location>
        <begin position="1"/>
        <end position="3"/>
    </location>
</feature>
<feature type="transmembrane region" description="Helical" evidence="2">
    <location>
        <begin position="4"/>
        <end position="24"/>
    </location>
</feature>
<feature type="topological domain" description="Extracellular" evidence="2">
    <location>
        <begin position="25"/>
        <end position="66"/>
    </location>
</feature>
<feature type="transmembrane region" description="Helical" evidence="2">
    <location>
        <begin position="67"/>
        <end position="87"/>
    </location>
</feature>
<feature type="topological domain" description="Cytoplasmic" evidence="2">
    <location>
        <begin position="88"/>
        <end position="98"/>
    </location>
</feature>
<feature type="transmembrane region" description="Helical" evidence="2">
    <location>
        <begin position="99"/>
        <end position="119"/>
    </location>
</feature>
<feature type="topological domain" description="Extracellular" evidence="2">
    <location>
        <begin position="120"/>
        <end position="140"/>
    </location>
</feature>
<feature type="transmembrane region" description="Helical" evidence="2">
    <location>
        <begin position="141"/>
        <end position="161"/>
    </location>
</feature>
<feature type="topological domain" description="Cytoplasmic">
    <location>
        <begin position="162"/>
        <end position="173"/>
    </location>
</feature>
<feature type="modified residue" description="Phosphoserine" evidence="1">
    <location>
        <position position="170"/>
    </location>
</feature>
<feature type="modified residue" description="Phosphothreonine" evidence="1">
    <location>
        <position position="171"/>
    </location>
</feature>
<feature type="glycosylation site" description="C-linked (Man) tryptophan" evidence="1">
    <location>
        <position position="43"/>
    </location>
</feature>
<feature type="glycosylation site" description="C-linked (Man) tryptophan" evidence="1">
    <location>
        <position position="61"/>
    </location>
</feature>
<feature type="glycosylation site" description="N-linked (GlcNAc...) asparagine" evidence="2">
    <location>
        <position position="62"/>
    </location>
</feature>
<feature type="sequence conflict" description="In Ref. 3; AA sequence." evidence="3" ref="3">
    <original>W</original>
    <variation>Q</variation>
    <location>
        <position position="28"/>
    </location>
</feature>
<accession>P54825</accession>
<gene>
    <name type="primary">Lim2</name>
</gene>
<reference key="1">
    <citation type="journal article" date="1993" name="Exp. Eye Res.">
        <title>Cloning and expression of a major rat lens membrane protein, MP20.</title>
        <authorList>
            <person name="Kumar N.M."/>
            <person name="Jarvis L.J."/>
            <person name="Tenbroek E."/>
            <person name="Louis C.F."/>
        </authorList>
    </citation>
    <scope>NUCLEOTIDE SEQUENCE [MRNA]</scope>
    <source>
        <tissue>Lens</tissue>
    </source>
</reference>
<reference key="2">
    <citation type="journal article" date="1993" name="Curr. Eye Res.">
        <title>The human lens fiber-cell intrinsic membrane protein MP19 gene: isolation and sequence analysis.</title>
        <authorList>
            <person name="Church R.L."/>
            <person name="Wang J.H."/>
        </authorList>
    </citation>
    <scope>NUCLEOTIDE SEQUENCE [MRNA]</scope>
    <source>
        <tissue>Lens</tissue>
    </source>
</reference>
<reference key="3">
    <citation type="journal article" date="1989" name="J. Biol. Chem.">
        <title>Identification of an 18,000-dalton protein in mammalian lens fiber cell membranes.</title>
        <authorList>
            <person name="Louis C.F."/>
            <person name="Hur K.C."/>
            <person name="Galvan A.C."/>
            <person name="Tenbroek E.M."/>
            <person name="Jarvis L.J."/>
            <person name="Eccleston E.D."/>
            <person name="Howard J.B."/>
        </authorList>
    </citation>
    <scope>PROTEIN SEQUENCE OF 1-31</scope>
    <source>
        <tissue>Lens</tissue>
    </source>
</reference>
<proteinExistence type="evidence at protein level"/>
<comment type="function">
    <text>Present in the thicker 16-17 nm junctions of mammalian lens fiber cells, where it may contribute to cell junctional organization. Acts as a receptor for calmodulin. May play an important role in both lens development and cataractogenesis.</text>
</comment>
<comment type="subunit">
    <text>Seems to be associated with itself or another lens membrane component via disulfide bonds.</text>
</comment>
<comment type="subcellular location">
    <subcellularLocation>
        <location>Membrane</location>
        <topology>Multi-pass membrane protein</topology>
    </subcellularLocation>
</comment>
<comment type="tissue specificity">
    <text>Eye lens specific.</text>
</comment>
<comment type="similarity">
    <text evidence="3">Belongs to the PMP-22/EMP/MP20 family.</text>
</comment>
<organism>
    <name type="scientific">Rattus norvegicus</name>
    <name type="common">Rat</name>
    <dbReference type="NCBI Taxonomy" id="10116"/>
    <lineage>
        <taxon>Eukaryota</taxon>
        <taxon>Metazoa</taxon>
        <taxon>Chordata</taxon>
        <taxon>Craniata</taxon>
        <taxon>Vertebrata</taxon>
        <taxon>Euteleostomi</taxon>
        <taxon>Mammalia</taxon>
        <taxon>Eutheria</taxon>
        <taxon>Euarchontoglires</taxon>
        <taxon>Glires</taxon>
        <taxon>Rodentia</taxon>
        <taxon>Myomorpha</taxon>
        <taxon>Muroidea</taxon>
        <taxon>Muridae</taxon>
        <taxon>Murinae</taxon>
        <taxon>Rattus</taxon>
    </lineage>
</organism>
<dbReference type="EMBL" id="S55224">
    <property type="protein sequence ID" value="AAB25334.1"/>
    <property type="molecule type" value="mRNA"/>
</dbReference>
<dbReference type="EMBL" id="M87053">
    <property type="protein sequence ID" value="AAA41631.1"/>
    <property type="molecule type" value="mRNA"/>
</dbReference>
<dbReference type="EMBL" id="L04191">
    <property type="protein sequence ID" value="AAB02792.1"/>
    <property type="molecule type" value="mRNA"/>
</dbReference>
<dbReference type="PIR" id="A49182">
    <property type="entry name" value="A49182"/>
</dbReference>
<dbReference type="RefSeq" id="NP_446223.1">
    <property type="nucleotide sequence ID" value="NM_053771.2"/>
</dbReference>
<dbReference type="SMR" id="P54825"/>
<dbReference type="STRING" id="10116.ENSRNOP00000023858"/>
<dbReference type="TCDB" id="8.A.16.3.1">
    <property type="family name" value="the ca(+) channel auxiliary subunit Gama1-Gama8 (ccaGama) family"/>
</dbReference>
<dbReference type="GlyCosmos" id="P54825">
    <property type="glycosylation" value="3 sites, No reported glycans"/>
</dbReference>
<dbReference type="GlyGen" id="P54825">
    <property type="glycosylation" value="4 sites"/>
</dbReference>
<dbReference type="PhosphoSitePlus" id="P54825"/>
<dbReference type="PaxDb" id="10116-ENSRNOP00000023858"/>
<dbReference type="Ensembl" id="ENSRNOT00000023858.3">
    <property type="protein sequence ID" value="ENSRNOP00000023858.1"/>
    <property type="gene ID" value="ENSRNOG00000017681.3"/>
</dbReference>
<dbReference type="GeneID" id="114903"/>
<dbReference type="KEGG" id="rno:114903"/>
<dbReference type="UCSC" id="RGD:621482">
    <property type="organism name" value="rat"/>
</dbReference>
<dbReference type="AGR" id="RGD:621482"/>
<dbReference type="CTD" id="3982"/>
<dbReference type="RGD" id="621482">
    <property type="gene designation" value="Lim2"/>
</dbReference>
<dbReference type="eggNOG" id="ENOG502QSWZ">
    <property type="taxonomic scope" value="Eukaryota"/>
</dbReference>
<dbReference type="GeneTree" id="ENSGT01050000244814"/>
<dbReference type="HOGENOM" id="CLU_113769_0_0_1"/>
<dbReference type="InParanoid" id="P54825"/>
<dbReference type="OMA" id="KCYMQTE"/>
<dbReference type="OrthoDB" id="6137544at2759"/>
<dbReference type="PhylomeDB" id="P54825"/>
<dbReference type="TreeFam" id="TF330587"/>
<dbReference type="PRO" id="PR:P54825"/>
<dbReference type="Proteomes" id="UP000002494">
    <property type="component" value="Chromosome 1"/>
</dbReference>
<dbReference type="Bgee" id="ENSRNOG00000017681">
    <property type="expression patterns" value="Expressed in heart and 3 other cell types or tissues"/>
</dbReference>
<dbReference type="GO" id="GO:0005886">
    <property type="term" value="C:plasma membrane"/>
    <property type="evidence" value="ECO:0000318"/>
    <property type="project" value="GO_Central"/>
</dbReference>
<dbReference type="GO" id="GO:0031982">
    <property type="term" value="C:vesicle"/>
    <property type="evidence" value="ECO:0000314"/>
    <property type="project" value="RGD"/>
</dbReference>
<dbReference type="GO" id="GO:0005212">
    <property type="term" value="F:structural constituent of eye lens"/>
    <property type="evidence" value="ECO:0007669"/>
    <property type="project" value="UniProtKB-KW"/>
</dbReference>
<dbReference type="GO" id="GO:0043010">
    <property type="term" value="P:camera-type eye development"/>
    <property type="evidence" value="ECO:0000266"/>
    <property type="project" value="RGD"/>
</dbReference>
<dbReference type="GO" id="GO:0002088">
    <property type="term" value="P:lens development in camera-type eye"/>
    <property type="evidence" value="ECO:0000266"/>
    <property type="project" value="RGD"/>
</dbReference>
<dbReference type="FunFam" id="1.20.140.150:FF:000013">
    <property type="entry name" value="lens fiber membrane intrinsic protein-like"/>
    <property type="match status" value="1"/>
</dbReference>
<dbReference type="Gene3D" id="1.20.140.150">
    <property type="match status" value="1"/>
</dbReference>
<dbReference type="InterPro" id="IPR003935">
    <property type="entry name" value="LMIP"/>
</dbReference>
<dbReference type="InterPro" id="IPR050579">
    <property type="entry name" value="PMP-22/EMP/MP20-like"/>
</dbReference>
<dbReference type="InterPro" id="IPR004031">
    <property type="entry name" value="PMP22/EMP/MP20/Claudin"/>
</dbReference>
<dbReference type="InterPro" id="IPR004032">
    <property type="entry name" value="PMP22_EMP_MP20"/>
</dbReference>
<dbReference type="PANTHER" id="PTHR10671">
    <property type="entry name" value="EPITHELIAL MEMBRANE PROTEIN-RELATED"/>
    <property type="match status" value="1"/>
</dbReference>
<dbReference type="PANTHER" id="PTHR10671:SF9">
    <property type="entry name" value="LENS FIBER MEMBRANE INTRINSIC PROTEIN"/>
    <property type="match status" value="1"/>
</dbReference>
<dbReference type="Pfam" id="PF00822">
    <property type="entry name" value="PMP22_Claudin"/>
    <property type="match status" value="1"/>
</dbReference>
<dbReference type="PRINTS" id="PR01453">
    <property type="entry name" value="EPMEMFAMILY"/>
</dbReference>
<dbReference type="PRINTS" id="PR01457">
    <property type="entry name" value="LENSMEMPROT"/>
</dbReference>
<dbReference type="PROSITE" id="PS01221">
    <property type="entry name" value="PMP22_1"/>
    <property type="match status" value="1"/>
</dbReference>
<dbReference type="PROSITE" id="PS01222">
    <property type="entry name" value="PMP22_2"/>
    <property type="match status" value="1"/>
</dbReference>
<protein>
    <recommendedName>
        <fullName>Lens fiber membrane intrinsic protein</fullName>
    </recommendedName>
    <alternativeName>
        <fullName>MP17</fullName>
    </alternativeName>
    <alternativeName>
        <fullName>MP18</fullName>
    </alternativeName>
    <alternativeName>
        <fullName>MP19</fullName>
    </alternativeName>
    <alternativeName>
        <fullName>MP20</fullName>
    </alternativeName>
</protein>
<keyword id="KW-0903">Direct protein sequencing</keyword>
<keyword id="KW-1015">Disulfide bond</keyword>
<keyword id="KW-0273">Eye lens protein</keyword>
<keyword id="KW-0325">Glycoprotein</keyword>
<keyword id="KW-0472">Membrane</keyword>
<keyword id="KW-0597">Phosphoprotein</keyword>
<keyword id="KW-1185">Reference proteome</keyword>
<keyword id="KW-0812">Transmembrane</keyword>
<keyword id="KW-1133">Transmembrane helix</keyword>
<name>LMIP_RAT</name>
<sequence length="173" mass="19637">MYSFMGGGLFCAWVGTILLVVATATDHWMQYRLSGSFAHQGLWRYCLGNKCFLQTESIAYWNATRAFMILSALCATSGIIMGVLAFAQQSTFTRLSRPFSAGIMFFASTLFVLLALAIYTGVTVSFLGRRFGDWRFSWSYILGWVALLMTFFAGIFYMCAYRMHECRRLSTPR</sequence>
<evidence type="ECO:0000250" key="1">
    <source>
        <dbReference type="UniProtKB" id="P20274"/>
    </source>
</evidence>
<evidence type="ECO:0000255" key="2"/>
<evidence type="ECO:0000305" key="3"/>